<proteinExistence type="inferred from homology"/>
<keyword id="KW-0963">Cytoplasm</keyword>
<keyword id="KW-0255">Endonuclease</keyword>
<keyword id="KW-0378">Hydrolase</keyword>
<keyword id="KW-0460">Magnesium</keyword>
<keyword id="KW-0479">Metal-binding</keyword>
<keyword id="KW-0507">mRNA processing</keyword>
<keyword id="KW-0540">Nuclease</keyword>
<keyword id="KW-0694">RNA-binding</keyword>
<keyword id="KW-0698">rRNA processing</keyword>
<keyword id="KW-0699">rRNA-binding</keyword>
<keyword id="KW-0819">tRNA processing</keyword>
<evidence type="ECO:0000255" key="1">
    <source>
        <dbReference type="HAMAP-Rule" id="MF_00104"/>
    </source>
</evidence>
<feature type="chain" id="PRO_1000194417" description="Ribonuclease 3">
    <location>
        <begin position="1"/>
        <end position="229"/>
    </location>
</feature>
<feature type="domain" description="RNase III" evidence="1">
    <location>
        <begin position="5"/>
        <end position="136"/>
    </location>
</feature>
<feature type="domain" description="DRBM" evidence="1">
    <location>
        <begin position="161"/>
        <end position="229"/>
    </location>
</feature>
<feature type="active site" evidence="1">
    <location>
        <position position="53"/>
    </location>
</feature>
<feature type="active site" evidence="1">
    <location>
        <position position="125"/>
    </location>
</feature>
<feature type="binding site" evidence="1">
    <location>
        <position position="49"/>
    </location>
    <ligand>
        <name>Mg(2+)</name>
        <dbReference type="ChEBI" id="CHEBI:18420"/>
    </ligand>
</feature>
<feature type="binding site" evidence="1">
    <location>
        <position position="122"/>
    </location>
    <ligand>
        <name>Mg(2+)</name>
        <dbReference type="ChEBI" id="CHEBI:18420"/>
    </ligand>
</feature>
<feature type="binding site" evidence="1">
    <location>
        <position position="125"/>
    </location>
    <ligand>
        <name>Mg(2+)</name>
        <dbReference type="ChEBI" id="CHEBI:18420"/>
    </ligand>
</feature>
<comment type="function">
    <text evidence="1">Digests double-stranded RNA. Involved in the processing of primary rRNA transcript to yield the immediate precursors to the large and small rRNAs (23S and 16S). Processes some mRNAs, and tRNAs when they are encoded in the rRNA operon. Processes pre-crRNA and tracrRNA of type II CRISPR loci if present in the organism.</text>
</comment>
<comment type="catalytic activity">
    <reaction evidence="1">
        <text>Endonucleolytic cleavage to 5'-phosphomonoester.</text>
        <dbReference type="EC" id="3.1.26.3"/>
    </reaction>
</comment>
<comment type="cofactor">
    <cofactor evidence="1">
        <name>Mg(2+)</name>
        <dbReference type="ChEBI" id="CHEBI:18420"/>
    </cofactor>
</comment>
<comment type="subunit">
    <text evidence="1">Homodimer.</text>
</comment>
<comment type="subcellular location">
    <subcellularLocation>
        <location evidence="1">Cytoplasm</location>
    </subcellularLocation>
</comment>
<comment type="similarity">
    <text evidence="1">Belongs to the ribonuclease III family.</text>
</comment>
<sequence>MVERLAELERALGITFRDRKLLQTALMHRSLFNEQPHLLSNLSDNERLEFLGDSVLHFVTTTWLFQQFPHQNESTLTSWRAALVSTKGLAECAATLNLGQYAFLSRGEDTPKGRQRSKLLADLFEAVIGAIYLDQGLEAARAFIEPFLHERIGTLQTAVLDPTTRLQEIVQSRHKQLPKYYLIDERGPDHQREYVMAVTVEGHEYTGTGPSKKAAKKAAAQAALADIDR</sequence>
<reference key="1">
    <citation type="submission" date="2008-12" db="EMBL/GenBank/DDBJ databases">
        <title>Complete sequence of Chloroflexus aggregans DSM 9485.</title>
        <authorList>
            <consortium name="US DOE Joint Genome Institute"/>
            <person name="Lucas S."/>
            <person name="Copeland A."/>
            <person name="Lapidus A."/>
            <person name="Glavina del Rio T."/>
            <person name="Dalin E."/>
            <person name="Tice H."/>
            <person name="Pitluck S."/>
            <person name="Foster B."/>
            <person name="Larimer F."/>
            <person name="Land M."/>
            <person name="Hauser L."/>
            <person name="Kyrpides N."/>
            <person name="Mikhailova N."/>
            <person name="Bryant D.A."/>
            <person name="Richardson P."/>
        </authorList>
    </citation>
    <scope>NUCLEOTIDE SEQUENCE [LARGE SCALE GENOMIC DNA]</scope>
    <source>
        <strain>MD-66 / DSM 9485</strain>
    </source>
</reference>
<dbReference type="EC" id="3.1.26.3" evidence="1"/>
<dbReference type="EMBL" id="CP001337">
    <property type="protein sequence ID" value="ACL24615.1"/>
    <property type="molecule type" value="Genomic_DNA"/>
</dbReference>
<dbReference type="RefSeq" id="WP_015940474.1">
    <property type="nucleotide sequence ID" value="NC_011831.1"/>
</dbReference>
<dbReference type="SMR" id="B8GAM6"/>
<dbReference type="STRING" id="326427.Cagg_1714"/>
<dbReference type="KEGG" id="cag:Cagg_1714"/>
<dbReference type="eggNOG" id="COG0571">
    <property type="taxonomic scope" value="Bacteria"/>
</dbReference>
<dbReference type="HOGENOM" id="CLU_000907_1_3_0"/>
<dbReference type="OrthoDB" id="9805026at2"/>
<dbReference type="Proteomes" id="UP000002508">
    <property type="component" value="Chromosome"/>
</dbReference>
<dbReference type="GO" id="GO:0005737">
    <property type="term" value="C:cytoplasm"/>
    <property type="evidence" value="ECO:0007669"/>
    <property type="project" value="UniProtKB-SubCell"/>
</dbReference>
<dbReference type="GO" id="GO:0003725">
    <property type="term" value="F:double-stranded RNA binding"/>
    <property type="evidence" value="ECO:0007669"/>
    <property type="project" value="TreeGrafter"/>
</dbReference>
<dbReference type="GO" id="GO:0046872">
    <property type="term" value="F:metal ion binding"/>
    <property type="evidence" value="ECO:0007669"/>
    <property type="project" value="UniProtKB-KW"/>
</dbReference>
<dbReference type="GO" id="GO:0004525">
    <property type="term" value="F:ribonuclease III activity"/>
    <property type="evidence" value="ECO:0007669"/>
    <property type="project" value="UniProtKB-UniRule"/>
</dbReference>
<dbReference type="GO" id="GO:0019843">
    <property type="term" value="F:rRNA binding"/>
    <property type="evidence" value="ECO:0007669"/>
    <property type="project" value="UniProtKB-KW"/>
</dbReference>
<dbReference type="GO" id="GO:0006397">
    <property type="term" value="P:mRNA processing"/>
    <property type="evidence" value="ECO:0007669"/>
    <property type="project" value="UniProtKB-UniRule"/>
</dbReference>
<dbReference type="GO" id="GO:0010468">
    <property type="term" value="P:regulation of gene expression"/>
    <property type="evidence" value="ECO:0007669"/>
    <property type="project" value="TreeGrafter"/>
</dbReference>
<dbReference type="GO" id="GO:0006364">
    <property type="term" value="P:rRNA processing"/>
    <property type="evidence" value="ECO:0007669"/>
    <property type="project" value="UniProtKB-UniRule"/>
</dbReference>
<dbReference type="GO" id="GO:0008033">
    <property type="term" value="P:tRNA processing"/>
    <property type="evidence" value="ECO:0007669"/>
    <property type="project" value="UniProtKB-KW"/>
</dbReference>
<dbReference type="CDD" id="cd10845">
    <property type="entry name" value="DSRM_RNAse_III_family"/>
    <property type="match status" value="1"/>
</dbReference>
<dbReference type="CDD" id="cd00593">
    <property type="entry name" value="RIBOc"/>
    <property type="match status" value="1"/>
</dbReference>
<dbReference type="FunFam" id="1.10.1520.10:FF:000001">
    <property type="entry name" value="Ribonuclease 3"/>
    <property type="match status" value="1"/>
</dbReference>
<dbReference type="FunFam" id="3.30.160.20:FF:000003">
    <property type="entry name" value="Ribonuclease 3"/>
    <property type="match status" value="1"/>
</dbReference>
<dbReference type="Gene3D" id="3.30.160.20">
    <property type="match status" value="1"/>
</dbReference>
<dbReference type="Gene3D" id="1.10.1520.10">
    <property type="entry name" value="Ribonuclease III domain"/>
    <property type="match status" value="1"/>
</dbReference>
<dbReference type="HAMAP" id="MF_00104">
    <property type="entry name" value="RNase_III"/>
    <property type="match status" value="1"/>
</dbReference>
<dbReference type="InterPro" id="IPR014720">
    <property type="entry name" value="dsRBD_dom"/>
</dbReference>
<dbReference type="InterPro" id="IPR011907">
    <property type="entry name" value="RNase_III"/>
</dbReference>
<dbReference type="InterPro" id="IPR000999">
    <property type="entry name" value="RNase_III_dom"/>
</dbReference>
<dbReference type="InterPro" id="IPR036389">
    <property type="entry name" value="RNase_III_sf"/>
</dbReference>
<dbReference type="NCBIfam" id="TIGR02191">
    <property type="entry name" value="RNaseIII"/>
    <property type="match status" value="1"/>
</dbReference>
<dbReference type="PANTHER" id="PTHR11207:SF0">
    <property type="entry name" value="RIBONUCLEASE 3"/>
    <property type="match status" value="1"/>
</dbReference>
<dbReference type="PANTHER" id="PTHR11207">
    <property type="entry name" value="RIBONUCLEASE III"/>
    <property type="match status" value="1"/>
</dbReference>
<dbReference type="Pfam" id="PF00035">
    <property type="entry name" value="dsrm"/>
    <property type="match status" value="1"/>
</dbReference>
<dbReference type="Pfam" id="PF14622">
    <property type="entry name" value="Ribonucleas_3_3"/>
    <property type="match status" value="1"/>
</dbReference>
<dbReference type="SMART" id="SM00358">
    <property type="entry name" value="DSRM"/>
    <property type="match status" value="1"/>
</dbReference>
<dbReference type="SMART" id="SM00535">
    <property type="entry name" value="RIBOc"/>
    <property type="match status" value="1"/>
</dbReference>
<dbReference type="SUPFAM" id="SSF54768">
    <property type="entry name" value="dsRNA-binding domain-like"/>
    <property type="match status" value="1"/>
</dbReference>
<dbReference type="SUPFAM" id="SSF69065">
    <property type="entry name" value="RNase III domain-like"/>
    <property type="match status" value="1"/>
</dbReference>
<dbReference type="PROSITE" id="PS50137">
    <property type="entry name" value="DS_RBD"/>
    <property type="match status" value="1"/>
</dbReference>
<dbReference type="PROSITE" id="PS00517">
    <property type="entry name" value="RNASE_3_1"/>
    <property type="match status" value="1"/>
</dbReference>
<dbReference type="PROSITE" id="PS50142">
    <property type="entry name" value="RNASE_3_2"/>
    <property type="match status" value="1"/>
</dbReference>
<accession>B8GAM6</accession>
<protein>
    <recommendedName>
        <fullName evidence="1">Ribonuclease 3</fullName>
        <ecNumber evidence="1">3.1.26.3</ecNumber>
    </recommendedName>
    <alternativeName>
        <fullName evidence="1">Ribonuclease III</fullName>
        <shortName evidence="1">RNase III</shortName>
    </alternativeName>
</protein>
<organism>
    <name type="scientific">Chloroflexus aggregans (strain MD-66 / DSM 9485)</name>
    <dbReference type="NCBI Taxonomy" id="326427"/>
    <lineage>
        <taxon>Bacteria</taxon>
        <taxon>Bacillati</taxon>
        <taxon>Chloroflexota</taxon>
        <taxon>Chloroflexia</taxon>
        <taxon>Chloroflexales</taxon>
        <taxon>Chloroflexineae</taxon>
        <taxon>Chloroflexaceae</taxon>
        <taxon>Chloroflexus</taxon>
    </lineage>
</organism>
<name>RNC_CHLAD</name>
<gene>
    <name evidence="1" type="primary">rnc</name>
    <name type="ordered locus">Cagg_1714</name>
</gene>